<keyword id="KW-0067">ATP-binding</keyword>
<keyword id="KW-0175">Coiled coil</keyword>
<keyword id="KW-0418">Kinase</keyword>
<keyword id="KW-0460">Magnesium</keyword>
<keyword id="KW-0479">Metal-binding</keyword>
<keyword id="KW-0547">Nucleotide-binding</keyword>
<keyword id="KW-1185">Reference proteome</keyword>
<keyword id="KW-0723">Serine/threonine-protein kinase</keyword>
<keyword id="KW-0808">Transferase</keyword>
<protein>
    <recommendedName>
        <fullName>Probable serine/threonine-protein kinase mkcD</fullName>
        <ecNumber>2.7.11.1</ecNumber>
    </recommendedName>
    <alternativeName>
        <fullName evidence="8">MAP kinase cascade D</fullName>
    </alternativeName>
</protein>
<gene>
    <name evidence="9" type="primary">mkcD</name>
    <name type="ORF">DDB_G0277413</name>
</gene>
<reference key="1">
    <citation type="journal article" date="2002" name="Nature">
        <title>Sequence and analysis of chromosome 2 of Dictyostelium discoideum.</title>
        <authorList>
            <person name="Gloeckner G."/>
            <person name="Eichinger L."/>
            <person name="Szafranski K."/>
            <person name="Pachebat J.A."/>
            <person name="Bankier A.T."/>
            <person name="Dear P.H."/>
            <person name="Lehmann R."/>
            <person name="Baumgart C."/>
            <person name="Parra G."/>
            <person name="Abril J.F."/>
            <person name="Guigo R."/>
            <person name="Kumpf K."/>
            <person name="Tunggal B."/>
            <person name="Cox E.C."/>
            <person name="Quail M.A."/>
            <person name="Platzer M."/>
            <person name="Rosenthal A."/>
            <person name="Noegel A.A."/>
        </authorList>
    </citation>
    <scope>NUCLEOTIDE SEQUENCE [LARGE SCALE GENOMIC DNA]</scope>
    <source>
        <strain>AX4</strain>
    </source>
</reference>
<reference evidence="9" key="2">
    <citation type="journal article" date="2005" name="Nature">
        <title>The genome of the social amoeba Dictyostelium discoideum.</title>
        <authorList>
            <person name="Eichinger L."/>
            <person name="Pachebat J.A."/>
            <person name="Gloeckner G."/>
            <person name="Rajandream M.A."/>
            <person name="Sucgang R."/>
            <person name="Berriman M."/>
            <person name="Song J."/>
            <person name="Olsen R."/>
            <person name="Szafranski K."/>
            <person name="Xu Q."/>
            <person name="Tunggal B."/>
            <person name="Kummerfeld S."/>
            <person name="Madera M."/>
            <person name="Konfortov B.A."/>
            <person name="Rivero F."/>
            <person name="Bankier A.T."/>
            <person name="Lehmann R."/>
            <person name="Hamlin N."/>
            <person name="Davies R."/>
            <person name="Gaudet P."/>
            <person name="Fey P."/>
            <person name="Pilcher K."/>
            <person name="Chen G."/>
            <person name="Saunders D."/>
            <person name="Sodergren E.J."/>
            <person name="Davis P."/>
            <person name="Kerhornou A."/>
            <person name="Nie X."/>
            <person name="Hall N."/>
            <person name="Anjard C."/>
            <person name="Hemphill L."/>
            <person name="Bason N."/>
            <person name="Farbrother P."/>
            <person name="Desany B."/>
            <person name="Just E."/>
            <person name="Morio T."/>
            <person name="Rost R."/>
            <person name="Churcher C.M."/>
            <person name="Cooper J."/>
            <person name="Haydock S."/>
            <person name="van Driessche N."/>
            <person name="Cronin A."/>
            <person name="Goodhead I."/>
            <person name="Muzny D.M."/>
            <person name="Mourier T."/>
            <person name="Pain A."/>
            <person name="Lu M."/>
            <person name="Harper D."/>
            <person name="Lindsay R."/>
            <person name="Hauser H."/>
            <person name="James K.D."/>
            <person name="Quiles M."/>
            <person name="Madan Babu M."/>
            <person name="Saito T."/>
            <person name="Buchrieser C."/>
            <person name="Wardroper A."/>
            <person name="Felder M."/>
            <person name="Thangavelu M."/>
            <person name="Johnson D."/>
            <person name="Knights A."/>
            <person name="Loulseged H."/>
            <person name="Mungall K.L."/>
            <person name="Oliver K."/>
            <person name="Price C."/>
            <person name="Quail M.A."/>
            <person name="Urushihara H."/>
            <person name="Hernandez J."/>
            <person name="Rabbinowitsch E."/>
            <person name="Steffen D."/>
            <person name="Sanders M."/>
            <person name="Ma J."/>
            <person name="Kohara Y."/>
            <person name="Sharp S."/>
            <person name="Simmonds M.N."/>
            <person name="Spiegler S."/>
            <person name="Tivey A."/>
            <person name="Sugano S."/>
            <person name="White B."/>
            <person name="Walker D."/>
            <person name="Woodward J.R."/>
            <person name="Winckler T."/>
            <person name="Tanaka Y."/>
            <person name="Shaulsky G."/>
            <person name="Schleicher M."/>
            <person name="Weinstock G.M."/>
            <person name="Rosenthal A."/>
            <person name="Cox E.C."/>
            <person name="Chisholm R.L."/>
            <person name="Gibbs R.A."/>
            <person name="Loomis W.F."/>
            <person name="Platzer M."/>
            <person name="Kay R.R."/>
            <person name="Williams J.G."/>
            <person name="Dear P.H."/>
            <person name="Noegel A.A."/>
            <person name="Barrell B.G."/>
            <person name="Kuspa A."/>
        </authorList>
    </citation>
    <scope>NUCLEOTIDE SEQUENCE [LARGE SCALE GENOMIC DNA]</scope>
    <source>
        <strain evidence="9">AX4</strain>
    </source>
</reference>
<organism>
    <name type="scientific">Dictyostelium discoideum</name>
    <name type="common">Social amoeba</name>
    <dbReference type="NCBI Taxonomy" id="44689"/>
    <lineage>
        <taxon>Eukaryota</taxon>
        <taxon>Amoebozoa</taxon>
        <taxon>Evosea</taxon>
        <taxon>Eumycetozoa</taxon>
        <taxon>Dictyostelia</taxon>
        <taxon>Dictyosteliales</taxon>
        <taxon>Dictyosteliaceae</taxon>
        <taxon>Dictyostelium</taxon>
    </lineage>
</organism>
<accession>Q8SSV3</accession>
<accession>Q54ZQ3</accession>
<evidence type="ECO:0000250" key="1">
    <source>
        <dbReference type="UniProtKB" id="P28523"/>
    </source>
</evidence>
<evidence type="ECO:0000250" key="2">
    <source>
        <dbReference type="UniProtKB" id="Q869N2"/>
    </source>
</evidence>
<evidence type="ECO:0000255" key="3"/>
<evidence type="ECO:0000255" key="4">
    <source>
        <dbReference type="PROSITE-ProRule" id="PRU00159"/>
    </source>
</evidence>
<evidence type="ECO:0000255" key="5">
    <source>
        <dbReference type="PROSITE-ProRule" id="PRU10027"/>
    </source>
</evidence>
<evidence type="ECO:0000256" key="6">
    <source>
        <dbReference type="SAM" id="MobiDB-lite"/>
    </source>
</evidence>
<evidence type="ECO:0000305" key="7"/>
<evidence type="ECO:0000312" key="8">
    <source>
        <dbReference type="dictyBase" id="DDB_G0277413"/>
    </source>
</evidence>
<evidence type="ECO:0000312" key="9">
    <source>
        <dbReference type="EMBL" id="EAL68669.1"/>
    </source>
</evidence>
<comment type="catalytic activity">
    <reaction evidence="2">
        <text>L-seryl-[protein] + ATP = O-phospho-L-seryl-[protein] + ADP + H(+)</text>
        <dbReference type="Rhea" id="RHEA:17989"/>
        <dbReference type="Rhea" id="RHEA-COMP:9863"/>
        <dbReference type="Rhea" id="RHEA-COMP:11604"/>
        <dbReference type="ChEBI" id="CHEBI:15378"/>
        <dbReference type="ChEBI" id="CHEBI:29999"/>
        <dbReference type="ChEBI" id="CHEBI:30616"/>
        <dbReference type="ChEBI" id="CHEBI:83421"/>
        <dbReference type="ChEBI" id="CHEBI:456216"/>
        <dbReference type="EC" id="2.7.11.1"/>
    </reaction>
</comment>
<comment type="catalytic activity">
    <reaction evidence="2">
        <text>L-threonyl-[protein] + ATP = O-phospho-L-threonyl-[protein] + ADP + H(+)</text>
        <dbReference type="Rhea" id="RHEA:46608"/>
        <dbReference type="Rhea" id="RHEA-COMP:11060"/>
        <dbReference type="Rhea" id="RHEA-COMP:11605"/>
        <dbReference type="ChEBI" id="CHEBI:15378"/>
        <dbReference type="ChEBI" id="CHEBI:30013"/>
        <dbReference type="ChEBI" id="CHEBI:30616"/>
        <dbReference type="ChEBI" id="CHEBI:61977"/>
        <dbReference type="ChEBI" id="CHEBI:456216"/>
        <dbReference type="EC" id="2.7.11.1"/>
    </reaction>
</comment>
<comment type="cofactor">
    <cofactor evidence="2">
        <name>Mg(2+)</name>
        <dbReference type="ChEBI" id="CHEBI:18420"/>
    </cofactor>
</comment>
<comment type="similarity">
    <text evidence="7">Belongs to the protein kinase superfamily. STE Ser/Thr protein kinase family. STE20 subfamily.</text>
</comment>
<name>MKCD_DICDI</name>
<sequence>MNNIKSFFGKKKKTQDQAEPLVIGDDSEKRTVILPPPSPNAVKRKNKNEKPYSIDLNGVGEVGGKVYNNVVGVFADGNDTGEISPTIYCVSDFQGLLKNDRKWIQYSELPEGYTVFYFQTILCVLNFLRRREFVHYIYVDKFEQILEMNENNENIITTVIPTNPIDENDKINSKSINDGDDNGGGSGGGGDNSPLTNVILPTITTTDTTTTSITISPPPKNHLSLLEEDIKNNQNLHHKQQQLQQLQQLKQQHLQQQQKLKQEQQQEQQQQQEDEPNKSPVSTSSTLSPQLESTNFEMTNDDTSLNAPNAMLTPNNISGISYSIIYPGKKKRIDFSRIFVSPGHSFRFPEEYDKALEKHLNEGNPKEHFKNLDFEARGGFGSVFCAKNKNPHSAYDKQMVALKKMPIKTLRHKRMNLSEIGFLKYFNHPNIVKFLCAYQKSNDELWMIMEFLSGGTLKNAASNFKFCERKIAYVCREILQGLDYLHKQNIAHRDLKSANVMVNDKGEIKLIDFGLCIDFSIEKEEINMLGSPSYISPEMINGNPHSLSTDIWSFGICALEMLLGKLPYHDSRLKAMVFVATNNLNLPLLLSTTTSSLEFRDFLTNCLQFDPSKRLTSSQLLQHPFLTKACPIKDFKEILPALYMSNTLSNMF</sequence>
<feature type="chain" id="PRO_0000381742" description="Probable serine/threonine-protein kinase mkcD">
    <location>
        <begin position="1"/>
        <end position="652"/>
    </location>
</feature>
<feature type="domain" description="Protein kinase" evidence="4">
    <location>
        <begin position="369"/>
        <end position="626"/>
    </location>
</feature>
<feature type="region of interest" description="Disordered" evidence="6">
    <location>
        <begin position="1"/>
        <end position="47"/>
    </location>
</feature>
<feature type="region of interest" description="Disordered" evidence="6">
    <location>
        <begin position="163"/>
        <end position="198"/>
    </location>
</feature>
<feature type="region of interest" description="Disordered" evidence="6">
    <location>
        <begin position="257"/>
        <end position="289"/>
    </location>
</feature>
<feature type="coiled-coil region" evidence="3">
    <location>
        <begin position="231"/>
        <end position="275"/>
    </location>
</feature>
<feature type="compositionally biased region" description="Gly residues" evidence="6">
    <location>
        <begin position="182"/>
        <end position="191"/>
    </location>
</feature>
<feature type="compositionally biased region" description="Low complexity" evidence="6">
    <location>
        <begin position="257"/>
        <end position="271"/>
    </location>
</feature>
<feature type="compositionally biased region" description="Polar residues" evidence="6">
    <location>
        <begin position="279"/>
        <end position="289"/>
    </location>
</feature>
<feature type="active site" description="Proton acceptor" evidence="1 4 5">
    <location>
        <position position="494"/>
    </location>
</feature>
<feature type="binding site" evidence="1 4">
    <location>
        <begin position="375"/>
        <end position="383"/>
    </location>
    <ligand>
        <name>ATP</name>
        <dbReference type="ChEBI" id="CHEBI:30616"/>
    </ligand>
</feature>
<feature type="binding site" evidence="1 4">
    <location>
        <position position="403"/>
    </location>
    <ligand>
        <name>ATP</name>
        <dbReference type="ChEBI" id="CHEBI:30616"/>
    </ligand>
</feature>
<proteinExistence type="inferred from homology"/>
<dbReference type="EC" id="2.7.11.1"/>
<dbReference type="EMBL" id="AAFI02000020">
    <property type="protein sequence ID" value="EAL68669.1"/>
    <property type="molecule type" value="Genomic_DNA"/>
</dbReference>
<dbReference type="RefSeq" id="XP_642589.1">
    <property type="nucleotide sequence ID" value="XM_637497.1"/>
</dbReference>
<dbReference type="SMR" id="Q8SSV3"/>
<dbReference type="PaxDb" id="44689-DDB0229913"/>
<dbReference type="EnsemblProtists" id="EAL68669">
    <property type="protein sequence ID" value="EAL68669"/>
    <property type="gene ID" value="DDB_G0277413"/>
</dbReference>
<dbReference type="GeneID" id="8621006"/>
<dbReference type="KEGG" id="ddi:DDB_G0277413"/>
<dbReference type="dictyBase" id="DDB_G0277413">
    <property type="gene designation" value="mkcD"/>
</dbReference>
<dbReference type="VEuPathDB" id="AmoebaDB:DDB_G0277413"/>
<dbReference type="eggNOG" id="KOG0578">
    <property type="taxonomic scope" value="Eukaryota"/>
</dbReference>
<dbReference type="HOGENOM" id="CLU_420607_0_0_1"/>
<dbReference type="InParanoid" id="Q8SSV3"/>
<dbReference type="OMA" id="FWMPPEQ"/>
<dbReference type="Reactome" id="R-DDI-383280">
    <property type="pathway name" value="Nuclear Receptor transcription pathway"/>
</dbReference>
<dbReference type="PRO" id="PR:Q8SSV3"/>
<dbReference type="Proteomes" id="UP000002195">
    <property type="component" value="Chromosome 2"/>
</dbReference>
<dbReference type="GO" id="GO:0005737">
    <property type="term" value="C:cytoplasm"/>
    <property type="evidence" value="ECO:0000318"/>
    <property type="project" value="GO_Central"/>
</dbReference>
<dbReference type="GO" id="GO:0005524">
    <property type="term" value="F:ATP binding"/>
    <property type="evidence" value="ECO:0007669"/>
    <property type="project" value="UniProtKB-KW"/>
</dbReference>
<dbReference type="GO" id="GO:0046872">
    <property type="term" value="F:metal ion binding"/>
    <property type="evidence" value="ECO:0007669"/>
    <property type="project" value="UniProtKB-KW"/>
</dbReference>
<dbReference type="GO" id="GO:0106310">
    <property type="term" value="F:protein serine kinase activity"/>
    <property type="evidence" value="ECO:0007669"/>
    <property type="project" value="RHEA"/>
</dbReference>
<dbReference type="GO" id="GO:0004674">
    <property type="term" value="F:protein serine/threonine kinase activity"/>
    <property type="evidence" value="ECO:0000318"/>
    <property type="project" value="GO_Central"/>
</dbReference>
<dbReference type="CDD" id="cd05122">
    <property type="entry name" value="PKc_STE"/>
    <property type="match status" value="1"/>
</dbReference>
<dbReference type="Gene3D" id="3.30.200.20">
    <property type="entry name" value="Phosphorylase Kinase, domain 1"/>
    <property type="match status" value="1"/>
</dbReference>
<dbReference type="Gene3D" id="1.10.510.10">
    <property type="entry name" value="Transferase(Phosphotransferase) domain 1"/>
    <property type="match status" value="1"/>
</dbReference>
<dbReference type="InterPro" id="IPR011009">
    <property type="entry name" value="Kinase-like_dom_sf"/>
</dbReference>
<dbReference type="InterPro" id="IPR051931">
    <property type="entry name" value="PAK3-like"/>
</dbReference>
<dbReference type="InterPro" id="IPR000719">
    <property type="entry name" value="Prot_kinase_dom"/>
</dbReference>
<dbReference type="InterPro" id="IPR008271">
    <property type="entry name" value="Ser/Thr_kinase_AS"/>
</dbReference>
<dbReference type="PANTHER" id="PTHR45832">
    <property type="entry name" value="SERINE/THREONINE-PROTEIN KINASE SAMKA-RELATED-RELATED"/>
    <property type="match status" value="1"/>
</dbReference>
<dbReference type="PANTHER" id="PTHR45832:SF22">
    <property type="entry name" value="SERINE_THREONINE-PROTEIN KINASE SAMKA-RELATED"/>
    <property type="match status" value="1"/>
</dbReference>
<dbReference type="Pfam" id="PF00069">
    <property type="entry name" value="Pkinase"/>
    <property type="match status" value="1"/>
</dbReference>
<dbReference type="SMART" id="SM00220">
    <property type="entry name" value="S_TKc"/>
    <property type="match status" value="1"/>
</dbReference>
<dbReference type="SUPFAM" id="SSF56112">
    <property type="entry name" value="Protein kinase-like (PK-like)"/>
    <property type="match status" value="1"/>
</dbReference>
<dbReference type="PROSITE" id="PS50011">
    <property type="entry name" value="PROTEIN_KINASE_DOM"/>
    <property type="match status" value="1"/>
</dbReference>
<dbReference type="PROSITE" id="PS00108">
    <property type="entry name" value="PROTEIN_KINASE_ST"/>
    <property type="match status" value="1"/>
</dbReference>